<protein>
    <recommendedName>
        <fullName evidence="1">DNA mismatch repair protein MutS</fullName>
    </recommendedName>
</protein>
<keyword id="KW-0067">ATP-binding</keyword>
<keyword id="KW-0227">DNA damage</keyword>
<keyword id="KW-0234">DNA repair</keyword>
<keyword id="KW-0238">DNA-binding</keyword>
<keyword id="KW-0547">Nucleotide-binding</keyword>
<keyword id="KW-1185">Reference proteome</keyword>
<accession>Q1LTQ0</accession>
<organism>
    <name type="scientific">Baumannia cicadellinicola subsp. Homalodisca coagulata</name>
    <dbReference type="NCBI Taxonomy" id="374463"/>
    <lineage>
        <taxon>Bacteria</taxon>
        <taxon>Pseudomonadati</taxon>
        <taxon>Pseudomonadota</taxon>
        <taxon>Gammaproteobacteria</taxon>
        <taxon>Candidatus Palibaumannia</taxon>
    </lineage>
</organism>
<comment type="function">
    <text evidence="1">This protein is involved in the repair of mismatches in DNA. It is possible that it carries out the mismatch recognition step. This protein has a weak ATPase activity.</text>
</comment>
<comment type="similarity">
    <text evidence="1">Belongs to the DNA mismatch repair MutS family.</text>
</comment>
<evidence type="ECO:0000255" key="1">
    <source>
        <dbReference type="HAMAP-Rule" id="MF_00096"/>
    </source>
</evidence>
<gene>
    <name evidence="1" type="primary">mutS</name>
    <name type="ordered locus">BCI_0209</name>
</gene>
<feature type="chain" id="PRO_1000071271" description="DNA mismatch repair protein MutS">
    <location>
        <begin position="1"/>
        <end position="855"/>
    </location>
</feature>
<feature type="binding site" evidence="1">
    <location>
        <begin position="617"/>
        <end position="624"/>
    </location>
    <ligand>
        <name>ATP</name>
        <dbReference type="ChEBI" id="CHEBI:30616"/>
    </ligand>
</feature>
<proteinExistence type="inferred from homology"/>
<name>MUTS_BAUCH</name>
<reference key="1">
    <citation type="journal article" date="2006" name="PLoS Biol.">
        <title>Metabolic complementarity and genomics of the dual bacterial symbiosis of sharpshooters.</title>
        <authorList>
            <person name="Wu D."/>
            <person name="Daugherty S.C."/>
            <person name="Van Aken S.E."/>
            <person name="Pai G.H."/>
            <person name="Watkins K.L."/>
            <person name="Khouri H."/>
            <person name="Tallon L.J."/>
            <person name="Zaborsky J.M."/>
            <person name="Dunbar H.E."/>
            <person name="Tran P.L."/>
            <person name="Moran N.A."/>
            <person name="Eisen J.A."/>
        </authorList>
    </citation>
    <scope>NUCLEOTIDE SEQUENCE [LARGE SCALE GENOMIC DNA]</scope>
</reference>
<sequence length="855" mass="95729">MKELTDKSILNHTPMMQQYWQIKAQHSDVLLFYRMGDFYELFYEDAKLASQLIDISLTKRGFSAGEPIPMAGIPYHALDSYLAKLVALGKSVAICEQVGEPTINKGPVERRVVRIVTPGTLSDEVLLNERQDNLLAAMLQDKQGFGYATLDITSGRFIVSEPKDFEAMAAELQRTNPAELLYPDTQHNLALIEHRRGLRRRPIWEFELDTACQQLMIQFGTSSLKGFGIECAHLALRAAGCLLQYAKDTQRTAMPHISTITLERQEDYVVMDAATMRNLELTHNLSGGIEHTLVAVLDHTVTSMGSRMLKRWLQMPTKHLTTIENRQQSIYFLQGKFDILQPILRKIGDLERILARLALRSARPRDLARIRNALQQLPDIQSLLADNTSGMHLSQLLSNVGYFDNLCQLLERAIVISPSALLRDGGIIATGYNLELDELRALANNATDYLDILEMKERKHTGLETLKIGFNAVHGYFIQLSREQSHRAPKRYIRRQTLKHVERYIIPELKEYEDKVITSKSKALSLEKKLYDALLDMLLPYLTQLQLSATALAELDVLSNLAERADTLHYVCPMINNQPIINIIDGRHPVVEPLMSKPFIANTLSLSDQNHMIIITGPNMGGKSTYMRQNALIVLLAYIGSFVPASQAIIGPIDRIFTRIGAADDLVSGRSTFMVEMTETANILHNATCQSLVLMDEIGRGTSTYDGLSLAWACAESLASRIKAMTLFATHYFELTTLPNKIKGIVNAHFAAIEYNDTIAFMHSIQNGAANKSYGLSVASLAGIPRDVIKCASRKLHELENLSNNIALTTPLSSRSLPQFTQETSPVIQALQEIDPDSLSPRQALDLLYSLKQMI</sequence>
<dbReference type="EMBL" id="CP000238">
    <property type="protein sequence ID" value="ABF14293.1"/>
    <property type="molecule type" value="Genomic_DNA"/>
</dbReference>
<dbReference type="RefSeq" id="WP_011520397.1">
    <property type="nucleotide sequence ID" value="NC_007984.1"/>
</dbReference>
<dbReference type="SMR" id="Q1LTQ0"/>
<dbReference type="STRING" id="374463.BCI_0209"/>
<dbReference type="KEGG" id="bci:BCI_0209"/>
<dbReference type="HOGENOM" id="CLU_002472_4_0_6"/>
<dbReference type="OrthoDB" id="9802448at2"/>
<dbReference type="Proteomes" id="UP000002427">
    <property type="component" value="Chromosome"/>
</dbReference>
<dbReference type="GO" id="GO:0005829">
    <property type="term" value="C:cytosol"/>
    <property type="evidence" value="ECO:0007669"/>
    <property type="project" value="TreeGrafter"/>
</dbReference>
<dbReference type="GO" id="GO:0005524">
    <property type="term" value="F:ATP binding"/>
    <property type="evidence" value="ECO:0007669"/>
    <property type="project" value="UniProtKB-UniRule"/>
</dbReference>
<dbReference type="GO" id="GO:0140664">
    <property type="term" value="F:ATP-dependent DNA damage sensor activity"/>
    <property type="evidence" value="ECO:0007669"/>
    <property type="project" value="InterPro"/>
</dbReference>
<dbReference type="GO" id="GO:0003684">
    <property type="term" value="F:damaged DNA binding"/>
    <property type="evidence" value="ECO:0007669"/>
    <property type="project" value="UniProtKB-UniRule"/>
</dbReference>
<dbReference type="GO" id="GO:0030983">
    <property type="term" value="F:mismatched DNA binding"/>
    <property type="evidence" value="ECO:0007669"/>
    <property type="project" value="InterPro"/>
</dbReference>
<dbReference type="GO" id="GO:0006298">
    <property type="term" value="P:mismatch repair"/>
    <property type="evidence" value="ECO:0007669"/>
    <property type="project" value="UniProtKB-UniRule"/>
</dbReference>
<dbReference type="CDD" id="cd03284">
    <property type="entry name" value="ABC_MutS1"/>
    <property type="match status" value="1"/>
</dbReference>
<dbReference type="FunFam" id="1.10.1420.10:FF:000002">
    <property type="entry name" value="DNA mismatch repair protein MutS"/>
    <property type="match status" value="1"/>
</dbReference>
<dbReference type="FunFam" id="3.30.420.110:FF:000001">
    <property type="entry name" value="DNA mismatch repair protein MutS"/>
    <property type="match status" value="1"/>
</dbReference>
<dbReference type="FunFam" id="3.40.1170.10:FF:000001">
    <property type="entry name" value="DNA mismatch repair protein MutS"/>
    <property type="match status" value="1"/>
</dbReference>
<dbReference type="FunFam" id="3.40.50.300:FF:000283">
    <property type="entry name" value="DNA mismatch repair protein MutS"/>
    <property type="match status" value="1"/>
</dbReference>
<dbReference type="Gene3D" id="1.10.1420.10">
    <property type="match status" value="2"/>
</dbReference>
<dbReference type="Gene3D" id="6.10.140.430">
    <property type="match status" value="1"/>
</dbReference>
<dbReference type="Gene3D" id="3.40.1170.10">
    <property type="entry name" value="DNA repair protein MutS, domain I"/>
    <property type="match status" value="1"/>
</dbReference>
<dbReference type="Gene3D" id="3.30.420.110">
    <property type="entry name" value="MutS, connector domain"/>
    <property type="match status" value="1"/>
</dbReference>
<dbReference type="Gene3D" id="3.40.50.300">
    <property type="entry name" value="P-loop containing nucleotide triphosphate hydrolases"/>
    <property type="match status" value="1"/>
</dbReference>
<dbReference type="HAMAP" id="MF_00096">
    <property type="entry name" value="MutS"/>
    <property type="match status" value="1"/>
</dbReference>
<dbReference type="InterPro" id="IPR005748">
    <property type="entry name" value="DNA_mismatch_repair_MutS"/>
</dbReference>
<dbReference type="InterPro" id="IPR007695">
    <property type="entry name" value="DNA_mismatch_repair_MutS-lik_N"/>
</dbReference>
<dbReference type="InterPro" id="IPR017261">
    <property type="entry name" value="DNA_mismatch_repair_MutS/MSH"/>
</dbReference>
<dbReference type="InterPro" id="IPR000432">
    <property type="entry name" value="DNA_mismatch_repair_MutS_C"/>
</dbReference>
<dbReference type="InterPro" id="IPR007861">
    <property type="entry name" value="DNA_mismatch_repair_MutS_clamp"/>
</dbReference>
<dbReference type="InterPro" id="IPR007696">
    <property type="entry name" value="DNA_mismatch_repair_MutS_core"/>
</dbReference>
<dbReference type="InterPro" id="IPR016151">
    <property type="entry name" value="DNA_mismatch_repair_MutS_N"/>
</dbReference>
<dbReference type="InterPro" id="IPR036187">
    <property type="entry name" value="DNA_mismatch_repair_MutS_sf"/>
</dbReference>
<dbReference type="InterPro" id="IPR007860">
    <property type="entry name" value="DNA_mmatch_repair_MutS_con_dom"/>
</dbReference>
<dbReference type="InterPro" id="IPR045076">
    <property type="entry name" value="MutS"/>
</dbReference>
<dbReference type="InterPro" id="IPR036678">
    <property type="entry name" value="MutS_con_dom_sf"/>
</dbReference>
<dbReference type="InterPro" id="IPR027417">
    <property type="entry name" value="P-loop_NTPase"/>
</dbReference>
<dbReference type="NCBIfam" id="TIGR01070">
    <property type="entry name" value="mutS1"/>
    <property type="match status" value="1"/>
</dbReference>
<dbReference type="NCBIfam" id="NF003810">
    <property type="entry name" value="PRK05399.1"/>
    <property type="match status" value="1"/>
</dbReference>
<dbReference type="PANTHER" id="PTHR11361:SF34">
    <property type="entry name" value="DNA MISMATCH REPAIR PROTEIN MSH1, MITOCHONDRIAL"/>
    <property type="match status" value="1"/>
</dbReference>
<dbReference type="PANTHER" id="PTHR11361">
    <property type="entry name" value="DNA MISMATCH REPAIR PROTEIN MUTS FAMILY MEMBER"/>
    <property type="match status" value="1"/>
</dbReference>
<dbReference type="Pfam" id="PF01624">
    <property type="entry name" value="MutS_I"/>
    <property type="match status" value="1"/>
</dbReference>
<dbReference type="Pfam" id="PF05188">
    <property type="entry name" value="MutS_II"/>
    <property type="match status" value="1"/>
</dbReference>
<dbReference type="Pfam" id="PF05192">
    <property type="entry name" value="MutS_III"/>
    <property type="match status" value="1"/>
</dbReference>
<dbReference type="Pfam" id="PF05190">
    <property type="entry name" value="MutS_IV"/>
    <property type="match status" value="1"/>
</dbReference>
<dbReference type="Pfam" id="PF00488">
    <property type="entry name" value="MutS_V"/>
    <property type="match status" value="1"/>
</dbReference>
<dbReference type="PIRSF" id="PIRSF037677">
    <property type="entry name" value="DNA_mis_repair_Msh6"/>
    <property type="match status" value="1"/>
</dbReference>
<dbReference type="SMART" id="SM00534">
    <property type="entry name" value="MUTSac"/>
    <property type="match status" value="1"/>
</dbReference>
<dbReference type="SMART" id="SM00533">
    <property type="entry name" value="MUTSd"/>
    <property type="match status" value="1"/>
</dbReference>
<dbReference type="SUPFAM" id="SSF55271">
    <property type="entry name" value="DNA repair protein MutS, domain I"/>
    <property type="match status" value="1"/>
</dbReference>
<dbReference type="SUPFAM" id="SSF53150">
    <property type="entry name" value="DNA repair protein MutS, domain II"/>
    <property type="match status" value="1"/>
</dbReference>
<dbReference type="SUPFAM" id="SSF48334">
    <property type="entry name" value="DNA repair protein MutS, domain III"/>
    <property type="match status" value="1"/>
</dbReference>
<dbReference type="SUPFAM" id="SSF52540">
    <property type="entry name" value="P-loop containing nucleoside triphosphate hydrolases"/>
    <property type="match status" value="1"/>
</dbReference>
<dbReference type="PROSITE" id="PS00486">
    <property type="entry name" value="DNA_MISMATCH_REPAIR_2"/>
    <property type="match status" value="1"/>
</dbReference>